<protein>
    <recommendedName>
        <fullName evidence="1">Small ribosomal subunit protein uS2</fullName>
    </recommendedName>
    <alternativeName>
        <fullName evidence="2">30S ribosomal protein S2</fullName>
    </alternativeName>
</protein>
<accession>A0LJ63</accession>
<gene>
    <name evidence="1" type="primary">rpsB</name>
    <name type="ordered locus">Sfum_1778</name>
</gene>
<evidence type="ECO:0000255" key="1">
    <source>
        <dbReference type="HAMAP-Rule" id="MF_00291"/>
    </source>
</evidence>
<evidence type="ECO:0000305" key="2"/>
<sequence length="274" mass="30877">MAVISMKQLLEAGVHFGHQTRRWNPKMKTYIFGARNGIYIIDLQRTVRLFHTAYQFVTQTVGSGEHVLFVGTKQQARDTIAEEAQRCGMYYINQRWLGGMLTNFKTIKLRVDRLKELDAMVEDGSINRFPKKEILQLMGEREKLEKNLGGIKNMARLPGALYVVDTQRENIAVLEANRLGIPVVAIVDTNCDPDLINYPIPGNDDAIRAIRLITSKVADACAEGRRRLEETEQADHDKEFTALEEVPAGQILKDEASGPIVEIVNPVAEAEEEQ</sequence>
<dbReference type="EMBL" id="CP000478">
    <property type="protein sequence ID" value="ABK17465.1"/>
    <property type="molecule type" value="Genomic_DNA"/>
</dbReference>
<dbReference type="RefSeq" id="WP_011698635.1">
    <property type="nucleotide sequence ID" value="NC_008554.1"/>
</dbReference>
<dbReference type="SMR" id="A0LJ63"/>
<dbReference type="FunCoup" id="A0LJ63">
    <property type="interactions" value="714"/>
</dbReference>
<dbReference type="STRING" id="335543.Sfum_1778"/>
<dbReference type="KEGG" id="sfu:Sfum_1778"/>
<dbReference type="eggNOG" id="COG0052">
    <property type="taxonomic scope" value="Bacteria"/>
</dbReference>
<dbReference type="HOGENOM" id="CLU_040318_1_2_7"/>
<dbReference type="InParanoid" id="A0LJ63"/>
<dbReference type="OrthoDB" id="9808036at2"/>
<dbReference type="Proteomes" id="UP000001784">
    <property type="component" value="Chromosome"/>
</dbReference>
<dbReference type="GO" id="GO:0022627">
    <property type="term" value="C:cytosolic small ribosomal subunit"/>
    <property type="evidence" value="ECO:0007669"/>
    <property type="project" value="TreeGrafter"/>
</dbReference>
<dbReference type="GO" id="GO:0003735">
    <property type="term" value="F:structural constituent of ribosome"/>
    <property type="evidence" value="ECO:0007669"/>
    <property type="project" value="InterPro"/>
</dbReference>
<dbReference type="GO" id="GO:0006412">
    <property type="term" value="P:translation"/>
    <property type="evidence" value="ECO:0007669"/>
    <property type="project" value="UniProtKB-UniRule"/>
</dbReference>
<dbReference type="CDD" id="cd01425">
    <property type="entry name" value="RPS2"/>
    <property type="match status" value="1"/>
</dbReference>
<dbReference type="FunFam" id="1.10.287.610:FF:000001">
    <property type="entry name" value="30S ribosomal protein S2"/>
    <property type="match status" value="1"/>
</dbReference>
<dbReference type="Gene3D" id="3.40.50.10490">
    <property type="entry name" value="Glucose-6-phosphate isomerase like protein, domain 1"/>
    <property type="match status" value="1"/>
</dbReference>
<dbReference type="Gene3D" id="1.10.287.610">
    <property type="entry name" value="Helix hairpin bin"/>
    <property type="match status" value="1"/>
</dbReference>
<dbReference type="HAMAP" id="MF_00291_B">
    <property type="entry name" value="Ribosomal_uS2_B"/>
    <property type="match status" value="1"/>
</dbReference>
<dbReference type="InterPro" id="IPR001865">
    <property type="entry name" value="Ribosomal_uS2"/>
</dbReference>
<dbReference type="InterPro" id="IPR005706">
    <property type="entry name" value="Ribosomal_uS2_bac/mit/plastid"/>
</dbReference>
<dbReference type="InterPro" id="IPR018130">
    <property type="entry name" value="Ribosomal_uS2_CS"/>
</dbReference>
<dbReference type="InterPro" id="IPR023591">
    <property type="entry name" value="Ribosomal_uS2_flav_dom_sf"/>
</dbReference>
<dbReference type="NCBIfam" id="TIGR01011">
    <property type="entry name" value="rpsB_bact"/>
    <property type="match status" value="1"/>
</dbReference>
<dbReference type="PANTHER" id="PTHR12534">
    <property type="entry name" value="30S RIBOSOMAL PROTEIN S2 PROKARYOTIC AND ORGANELLAR"/>
    <property type="match status" value="1"/>
</dbReference>
<dbReference type="PANTHER" id="PTHR12534:SF0">
    <property type="entry name" value="SMALL RIBOSOMAL SUBUNIT PROTEIN US2M"/>
    <property type="match status" value="1"/>
</dbReference>
<dbReference type="Pfam" id="PF00318">
    <property type="entry name" value="Ribosomal_S2"/>
    <property type="match status" value="1"/>
</dbReference>
<dbReference type="PRINTS" id="PR00395">
    <property type="entry name" value="RIBOSOMALS2"/>
</dbReference>
<dbReference type="SUPFAM" id="SSF52313">
    <property type="entry name" value="Ribosomal protein S2"/>
    <property type="match status" value="1"/>
</dbReference>
<dbReference type="PROSITE" id="PS00962">
    <property type="entry name" value="RIBOSOMAL_S2_1"/>
    <property type="match status" value="1"/>
</dbReference>
<comment type="similarity">
    <text evidence="1">Belongs to the universal ribosomal protein uS2 family.</text>
</comment>
<proteinExistence type="inferred from homology"/>
<feature type="chain" id="PRO_1000004099" description="Small ribosomal subunit protein uS2">
    <location>
        <begin position="1"/>
        <end position="274"/>
    </location>
</feature>
<keyword id="KW-1185">Reference proteome</keyword>
<keyword id="KW-0687">Ribonucleoprotein</keyword>
<keyword id="KW-0689">Ribosomal protein</keyword>
<reference key="1">
    <citation type="submission" date="2006-10" db="EMBL/GenBank/DDBJ databases">
        <title>Complete sequence of Syntrophobacter fumaroxidans MPOB.</title>
        <authorList>
            <consortium name="US DOE Joint Genome Institute"/>
            <person name="Copeland A."/>
            <person name="Lucas S."/>
            <person name="Lapidus A."/>
            <person name="Barry K."/>
            <person name="Detter J.C."/>
            <person name="Glavina del Rio T."/>
            <person name="Hammon N."/>
            <person name="Israni S."/>
            <person name="Pitluck S."/>
            <person name="Goltsman E.G."/>
            <person name="Martinez M."/>
            <person name="Schmutz J."/>
            <person name="Larimer F."/>
            <person name="Land M."/>
            <person name="Hauser L."/>
            <person name="Kyrpides N."/>
            <person name="Kim E."/>
            <person name="Boone D.R."/>
            <person name="Brockman F."/>
            <person name="Culley D."/>
            <person name="Ferry J."/>
            <person name="Gunsalus R."/>
            <person name="McInerney M.J."/>
            <person name="Morrison M."/>
            <person name="Plugge C."/>
            <person name="Rohlin L."/>
            <person name="Scholten J."/>
            <person name="Sieber J."/>
            <person name="Stams A.J.M."/>
            <person name="Worm P."/>
            <person name="Henstra A.M."/>
            <person name="Richardson P."/>
        </authorList>
    </citation>
    <scope>NUCLEOTIDE SEQUENCE [LARGE SCALE GENOMIC DNA]</scope>
    <source>
        <strain>DSM 10017 / MPOB</strain>
    </source>
</reference>
<organism>
    <name type="scientific">Syntrophobacter fumaroxidans (strain DSM 10017 / MPOB)</name>
    <dbReference type="NCBI Taxonomy" id="335543"/>
    <lineage>
        <taxon>Bacteria</taxon>
        <taxon>Pseudomonadati</taxon>
        <taxon>Thermodesulfobacteriota</taxon>
        <taxon>Syntrophobacteria</taxon>
        <taxon>Syntrophobacterales</taxon>
        <taxon>Syntrophobacteraceae</taxon>
        <taxon>Syntrophobacter</taxon>
    </lineage>
</organism>
<name>RS2_SYNFM</name>